<keyword id="KW-0030">Aminoacyl-tRNA synthetase</keyword>
<keyword id="KW-0067">ATP-binding</keyword>
<keyword id="KW-0963">Cytoplasm</keyword>
<keyword id="KW-0436">Ligase</keyword>
<keyword id="KW-0547">Nucleotide-binding</keyword>
<keyword id="KW-0648">Protein biosynthesis</keyword>
<keyword id="KW-1185">Reference proteome</keyword>
<proteinExistence type="inferred from homology"/>
<reference key="1">
    <citation type="submission" date="2006-02" db="EMBL/GenBank/DDBJ databases">
        <title>Complete sequence of chromosome of Jannaschia sp. CCS1.</title>
        <authorList>
            <consortium name="US DOE Joint Genome Institute"/>
            <person name="Copeland A."/>
            <person name="Lucas S."/>
            <person name="Lapidus A."/>
            <person name="Barry K."/>
            <person name="Detter J.C."/>
            <person name="Glavina del Rio T."/>
            <person name="Hammon N."/>
            <person name="Israni S."/>
            <person name="Pitluck S."/>
            <person name="Brettin T."/>
            <person name="Bruce D."/>
            <person name="Han C."/>
            <person name="Tapia R."/>
            <person name="Gilna P."/>
            <person name="Chertkov O."/>
            <person name="Saunders E."/>
            <person name="Schmutz J."/>
            <person name="Larimer F."/>
            <person name="Land M."/>
            <person name="Kyrpides N."/>
            <person name="Lykidis A."/>
            <person name="Moran M.A."/>
            <person name="Belas R."/>
            <person name="Ye W."/>
            <person name="Buchan A."/>
            <person name="Gonzalez J.M."/>
            <person name="Schell M.A."/>
            <person name="Richardson P."/>
        </authorList>
    </citation>
    <scope>NUCLEOTIDE SEQUENCE [LARGE SCALE GENOMIC DNA]</scope>
    <source>
        <strain>CCS1</strain>
    </source>
</reference>
<protein>
    <recommendedName>
        <fullName evidence="1">Glutamate--tRNA ligase 1</fullName>
        <ecNumber evidence="1">6.1.1.17</ecNumber>
    </recommendedName>
    <alternativeName>
        <fullName evidence="1">Glutamyl-tRNA synthetase 1</fullName>
        <shortName evidence="1">GluRS 1</shortName>
    </alternativeName>
</protein>
<gene>
    <name evidence="1" type="primary">gltX1</name>
    <name type="ordered locus">Jann_1842</name>
</gene>
<name>SYE1_JANSC</name>
<comment type="function">
    <text evidence="1">Catalyzes the attachment of glutamate to tRNA(Glu) in a two-step reaction: glutamate is first activated by ATP to form Glu-AMP and then transferred to the acceptor end of tRNA(Glu).</text>
</comment>
<comment type="catalytic activity">
    <reaction evidence="1">
        <text>tRNA(Glu) + L-glutamate + ATP = L-glutamyl-tRNA(Glu) + AMP + diphosphate</text>
        <dbReference type="Rhea" id="RHEA:23540"/>
        <dbReference type="Rhea" id="RHEA-COMP:9663"/>
        <dbReference type="Rhea" id="RHEA-COMP:9680"/>
        <dbReference type="ChEBI" id="CHEBI:29985"/>
        <dbReference type="ChEBI" id="CHEBI:30616"/>
        <dbReference type="ChEBI" id="CHEBI:33019"/>
        <dbReference type="ChEBI" id="CHEBI:78442"/>
        <dbReference type="ChEBI" id="CHEBI:78520"/>
        <dbReference type="ChEBI" id="CHEBI:456215"/>
        <dbReference type="EC" id="6.1.1.17"/>
    </reaction>
</comment>
<comment type="subunit">
    <text evidence="1">Monomer.</text>
</comment>
<comment type="subcellular location">
    <subcellularLocation>
        <location evidence="1">Cytoplasm</location>
    </subcellularLocation>
</comment>
<comment type="similarity">
    <text evidence="1">Belongs to the class-I aminoacyl-tRNA synthetase family. Glutamate--tRNA ligase type 1 subfamily.</text>
</comment>
<sequence length="470" mass="51878">MSSDAASPVVTRIAPSPTGTMHIGTARTGLFNWLFARKHGGKFVLRIEDTDRERSTPEATQAILDGMAWLGLDYDGEAVSQFARADRHREVAEQMLAEGHAYKCFSTQDEIAAFRDAAKADGRSTLFLSPWREASDHPDAPYVIRLKAPRDGTTVIRDRVQSDVTIQNATLDDMILLRSDGTPTYMHAVVVDDHDMGVTHVVRGDDHLNNAARQIQIYAAMGWAEPVWSHIPLIHGDDGKKLSKRHGATGVMEYAEMGIPAAAMRNYLTRLGWSHGDEELFTDEQARDWFDLDGIGKSPSRLDMKKLANVTGWHIARTDDADLVAQIEGYLALTGAPALSQAQHDGLTRAMYCLKDRAKSLPDLLDKGRFVLENRPFDYDEKSVTMLDPVSRSILRELTAQLQNARWTRDTLEGVLNAAADSHGLKFGKLAGPLRAALSGRSVSPSVFDMMLVIGRDETLARLDEAASLT</sequence>
<feature type="chain" id="PRO_0000330975" description="Glutamate--tRNA ligase 1">
    <location>
        <begin position="1"/>
        <end position="470"/>
    </location>
</feature>
<feature type="short sequence motif" description="'HIGH' region" evidence="1">
    <location>
        <begin position="15"/>
        <end position="25"/>
    </location>
</feature>
<feature type="short sequence motif" description="'KMSKS' region" evidence="1">
    <location>
        <begin position="241"/>
        <end position="245"/>
    </location>
</feature>
<feature type="binding site" evidence="1">
    <location>
        <position position="244"/>
    </location>
    <ligand>
        <name>ATP</name>
        <dbReference type="ChEBI" id="CHEBI:30616"/>
    </ligand>
</feature>
<organism>
    <name type="scientific">Jannaschia sp. (strain CCS1)</name>
    <dbReference type="NCBI Taxonomy" id="290400"/>
    <lineage>
        <taxon>Bacteria</taxon>
        <taxon>Pseudomonadati</taxon>
        <taxon>Pseudomonadota</taxon>
        <taxon>Alphaproteobacteria</taxon>
        <taxon>Rhodobacterales</taxon>
        <taxon>Roseobacteraceae</taxon>
        <taxon>Jannaschia</taxon>
    </lineage>
</organism>
<evidence type="ECO:0000255" key="1">
    <source>
        <dbReference type="HAMAP-Rule" id="MF_00022"/>
    </source>
</evidence>
<dbReference type="EC" id="6.1.1.17" evidence="1"/>
<dbReference type="EMBL" id="CP000264">
    <property type="protein sequence ID" value="ABD54759.1"/>
    <property type="molecule type" value="Genomic_DNA"/>
</dbReference>
<dbReference type="RefSeq" id="WP_011454964.1">
    <property type="nucleotide sequence ID" value="NC_007802.1"/>
</dbReference>
<dbReference type="SMR" id="Q28RA3"/>
<dbReference type="STRING" id="290400.Jann_1842"/>
<dbReference type="KEGG" id="jan:Jann_1842"/>
<dbReference type="eggNOG" id="COG0008">
    <property type="taxonomic scope" value="Bacteria"/>
</dbReference>
<dbReference type="HOGENOM" id="CLU_015768_6_0_5"/>
<dbReference type="OrthoDB" id="9807503at2"/>
<dbReference type="Proteomes" id="UP000008326">
    <property type="component" value="Chromosome"/>
</dbReference>
<dbReference type="GO" id="GO:0005829">
    <property type="term" value="C:cytosol"/>
    <property type="evidence" value="ECO:0007669"/>
    <property type="project" value="TreeGrafter"/>
</dbReference>
<dbReference type="GO" id="GO:0005524">
    <property type="term" value="F:ATP binding"/>
    <property type="evidence" value="ECO:0007669"/>
    <property type="project" value="UniProtKB-UniRule"/>
</dbReference>
<dbReference type="GO" id="GO:0004818">
    <property type="term" value="F:glutamate-tRNA ligase activity"/>
    <property type="evidence" value="ECO:0007669"/>
    <property type="project" value="UniProtKB-UniRule"/>
</dbReference>
<dbReference type="GO" id="GO:0000049">
    <property type="term" value="F:tRNA binding"/>
    <property type="evidence" value="ECO:0007669"/>
    <property type="project" value="InterPro"/>
</dbReference>
<dbReference type="GO" id="GO:0008270">
    <property type="term" value="F:zinc ion binding"/>
    <property type="evidence" value="ECO:0007669"/>
    <property type="project" value="InterPro"/>
</dbReference>
<dbReference type="GO" id="GO:0006424">
    <property type="term" value="P:glutamyl-tRNA aminoacylation"/>
    <property type="evidence" value="ECO:0007669"/>
    <property type="project" value="UniProtKB-UniRule"/>
</dbReference>
<dbReference type="CDD" id="cd00808">
    <property type="entry name" value="GluRS_core"/>
    <property type="match status" value="1"/>
</dbReference>
<dbReference type="FunFam" id="3.40.50.620:FF:000007">
    <property type="entry name" value="Glutamate--tRNA ligase"/>
    <property type="match status" value="1"/>
</dbReference>
<dbReference type="Gene3D" id="1.10.10.350">
    <property type="match status" value="1"/>
</dbReference>
<dbReference type="Gene3D" id="3.40.50.620">
    <property type="entry name" value="HUPs"/>
    <property type="match status" value="1"/>
</dbReference>
<dbReference type="HAMAP" id="MF_00022">
    <property type="entry name" value="Glu_tRNA_synth_type1"/>
    <property type="match status" value="1"/>
</dbReference>
<dbReference type="InterPro" id="IPR045462">
    <property type="entry name" value="aa-tRNA-synth_I_cd-bd"/>
</dbReference>
<dbReference type="InterPro" id="IPR020751">
    <property type="entry name" value="aa-tRNA-synth_I_codon-bd_sub2"/>
</dbReference>
<dbReference type="InterPro" id="IPR001412">
    <property type="entry name" value="aa-tRNA-synth_I_CS"/>
</dbReference>
<dbReference type="InterPro" id="IPR008925">
    <property type="entry name" value="aa_tRNA-synth_I_cd-bd_sf"/>
</dbReference>
<dbReference type="InterPro" id="IPR004527">
    <property type="entry name" value="Glu-tRNA-ligase_bac/mito"/>
</dbReference>
<dbReference type="InterPro" id="IPR000924">
    <property type="entry name" value="Glu/Gln-tRNA-synth"/>
</dbReference>
<dbReference type="InterPro" id="IPR020058">
    <property type="entry name" value="Glu/Gln-tRNA-synth_Ib_cat-dom"/>
</dbReference>
<dbReference type="InterPro" id="IPR049940">
    <property type="entry name" value="GluQ/Sye"/>
</dbReference>
<dbReference type="InterPro" id="IPR033910">
    <property type="entry name" value="GluRS_core"/>
</dbReference>
<dbReference type="InterPro" id="IPR014729">
    <property type="entry name" value="Rossmann-like_a/b/a_fold"/>
</dbReference>
<dbReference type="NCBIfam" id="TIGR00464">
    <property type="entry name" value="gltX_bact"/>
    <property type="match status" value="1"/>
</dbReference>
<dbReference type="PANTHER" id="PTHR43311">
    <property type="entry name" value="GLUTAMATE--TRNA LIGASE"/>
    <property type="match status" value="1"/>
</dbReference>
<dbReference type="PANTHER" id="PTHR43311:SF2">
    <property type="entry name" value="GLUTAMATE--TRNA LIGASE, MITOCHONDRIAL-RELATED"/>
    <property type="match status" value="1"/>
</dbReference>
<dbReference type="Pfam" id="PF19269">
    <property type="entry name" value="Anticodon_2"/>
    <property type="match status" value="1"/>
</dbReference>
<dbReference type="Pfam" id="PF00749">
    <property type="entry name" value="tRNA-synt_1c"/>
    <property type="match status" value="1"/>
</dbReference>
<dbReference type="PRINTS" id="PR00987">
    <property type="entry name" value="TRNASYNTHGLU"/>
</dbReference>
<dbReference type="SUPFAM" id="SSF48163">
    <property type="entry name" value="An anticodon-binding domain of class I aminoacyl-tRNA synthetases"/>
    <property type="match status" value="1"/>
</dbReference>
<dbReference type="SUPFAM" id="SSF52374">
    <property type="entry name" value="Nucleotidylyl transferase"/>
    <property type="match status" value="1"/>
</dbReference>
<dbReference type="PROSITE" id="PS00178">
    <property type="entry name" value="AA_TRNA_LIGASE_I"/>
    <property type="match status" value="1"/>
</dbReference>
<accession>Q28RA3</accession>